<feature type="chain" id="PRO_0000236713" description="Tyrosine--tRNA ligase">
    <location>
        <begin position="1"/>
        <end position="396"/>
    </location>
</feature>
<feature type="domain" description="S4 RNA-binding" evidence="1">
    <location>
        <begin position="338"/>
        <end position="396"/>
    </location>
</feature>
<feature type="short sequence motif" description="'HIGH' region">
    <location>
        <begin position="43"/>
        <end position="52"/>
    </location>
</feature>
<feature type="short sequence motif" description="'KMSKS' region">
    <location>
        <begin position="227"/>
        <end position="231"/>
    </location>
</feature>
<feature type="binding site" evidence="1">
    <location>
        <position position="230"/>
    </location>
    <ligand>
        <name>ATP</name>
        <dbReference type="ChEBI" id="CHEBI:30616"/>
    </ligand>
</feature>
<evidence type="ECO:0000255" key="1">
    <source>
        <dbReference type="HAMAP-Rule" id="MF_02007"/>
    </source>
</evidence>
<comment type="function">
    <text evidence="1">Catalyzes the attachment of tyrosine to tRNA(Tyr) in a two-step reaction: tyrosine is first activated by ATP to form Tyr-AMP and then transferred to the acceptor end of tRNA(Tyr).</text>
</comment>
<comment type="catalytic activity">
    <reaction evidence="1">
        <text>tRNA(Tyr) + L-tyrosine + ATP = L-tyrosyl-tRNA(Tyr) + AMP + diphosphate + H(+)</text>
        <dbReference type="Rhea" id="RHEA:10220"/>
        <dbReference type="Rhea" id="RHEA-COMP:9706"/>
        <dbReference type="Rhea" id="RHEA-COMP:9707"/>
        <dbReference type="ChEBI" id="CHEBI:15378"/>
        <dbReference type="ChEBI" id="CHEBI:30616"/>
        <dbReference type="ChEBI" id="CHEBI:33019"/>
        <dbReference type="ChEBI" id="CHEBI:58315"/>
        <dbReference type="ChEBI" id="CHEBI:78442"/>
        <dbReference type="ChEBI" id="CHEBI:78536"/>
        <dbReference type="ChEBI" id="CHEBI:456215"/>
        <dbReference type="EC" id="6.1.1.1"/>
    </reaction>
</comment>
<comment type="subunit">
    <text evidence="1">Homodimer.</text>
</comment>
<comment type="subcellular location">
    <subcellularLocation>
        <location evidence="1">Cytoplasm</location>
    </subcellularLocation>
</comment>
<comment type="similarity">
    <text evidence="1">Belongs to the class-I aminoacyl-tRNA synthetase family. TyrS type 2 subfamily.</text>
</comment>
<sequence length="396" mass="44240">MNQAENRIDQILKRGVAEVIVEEDFKKLLLSGKKLRLKEGFDPSSPDIHLGHMVALRKLRQLQDLGHQVVLIVGDWTAQIGDPSGASVTRPMLSAEQVKANAKTYLEQFFKIVDKDKTEVRWQSEWYANFKLEDVVRLSSKFTVAQMLARDDFAKRYAAGKPISVTELLYPMLQAYDSVMVKSDVEFGGTDQKFNLLVGRELQEMLGQKPQQVLMVPILVGTDGVHKMSKSLGNYIGVAEEPTEIFGKCMSIPDELILQYFELVTDIPATEIADFKNQMANGLVNPMVLKKRLARELITQLYSAAAAEEADAQFTRVVQRGEIPEDMPECRLENGESICVIDFIIKADLAKSKSEARRLLEQGGVEINSAKISDPGTTVKCGDIIKAGKRRYSKAV</sequence>
<keyword id="KW-0030">Aminoacyl-tRNA synthetase</keyword>
<keyword id="KW-0067">ATP-binding</keyword>
<keyword id="KW-0963">Cytoplasm</keyword>
<keyword id="KW-0436">Ligase</keyword>
<keyword id="KW-0547">Nucleotide-binding</keyword>
<keyword id="KW-0648">Protein biosynthesis</keyword>
<keyword id="KW-0694">RNA-binding</keyword>
<dbReference type="EC" id="6.1.1.1" evidence="1"/>
<dbReference type="EMBL" id="CP000027">
    <property type="protein sequence ID" value="AAW40099.1"/>
    <property type="molecule type" value="Genomic_DNA"/>
</dbReference>
<dbReference type="RefSeq" id="WP_010936376.1">
    <property type="nucleotide sequence ID" value="NC_002936.3"/>
</dbReference>
<dbReference type="SMR" id="Q3Z8V6"/>
<dbReference type="FunCoup" id="Q3Z8V6">
    <property type="interactions" value="65"/>
</dbReference>
<dbReference type="STRING" id="243164.DET0601"/>
<dbReference type="GeneID" id="3230062"/>
<dbReference type="KEGG" id="det:DET0601"/>
<dbReference type="PATRIC" id="fig|243164.10.peg.579"/>
<dbReference type="eggNOG" id="COG0162">
    <property type="taxonomic scope" value="Bacteria"/>
</dbReference>
<dbReference type="HOGENOM" id="CLU_024003_5_0_0"/>
<dbReference type="InParanoid" id="Q3Z8V6"/>
<dbReference type="Proteomes" id="UP000008289">
    <property type="component" value="Chromosome"/>
</dbReference>
<dbReference type="GO" id="GO:0005829">
    <property type="term" value="C:cytosol"/>
    <property type="evidence" value="ECO:0007669"/>
    <property type="project" value="TreeGrafter"/>
</dbReference>
<dbReference type="GO" id="GO:0005524">
    <property type="term" value="F:ATP binding"/>
    <property type="evidence" value="ECO:0007669"/>
    <property type="project" value="UniProtKB-UniRule"/>
</dbReference>
<dbReference type="GO" id="GO:0003723">
    <property type="term" value="F:RNA binding"/>
    <property type="evidence" value="ECO:0007669"/>
    <property type="project" value="UniProtKB-KW"/>
</dbReference>
<dbReference type="GO" id="GO:0004831">
    <property type="term" value="F:tyrosine-tRNA ligase activity"/>
    <property type="evidence" value="ECO:0007669"/>
    <property type="project" value="UniProtKB-UniRule"/>
</dbReference>
<dbReference type="GO" id="GO:0006437">
    <property type="term" value="P:tyrosyl-tRNA aminoacylation"/>
    <property type="evidence" value="ECO:0007669"/>
    <property type="project" value="UniProtKB-UniRule"/>
</dbReference>
<dbReference type="CDD" id="cd00165">
    <property type="entry name" value="S4"/>
    <property type="match status" value="1"/>
</dbReference>
<dbReference type="CDD" id="cd00805">
    <property type="entry name" value="TyrRS_core"/>
    <property type="match status" value="1"/>
</dbReference>
<dbReference type="FunFam" id="3.40.50.620:FF:000061">
    <property type="entry name" value="Tyrosine--tRNA ligase"/>
    <property type="match status" value="1"/>
</dbReference>
<dbReference type="Gene3D" id="3.40.50.620">
    <property type="entry name" value="HUPs"/>
    <property type="match status" value="1"/>
</dbReference>
<dbReference type="Gene3D" id="3.10.290.10">
    <property type="entry name" value="RNA-binding S4 domain"/>
    <property type="match status" value="1"/>
</dbReference>
<dbReference type="Gene3D" id="1.10.240.10">
    <property type="entry name" value="Tyrosyl-Transfer RNA Synthetase"/>
    <property type="match status" value="1"/>
</dbReference>
<dbReference type="HAMAP" id="MF_02007">
    <property type="entry name" value="Tyr_tRNA_synth_type2"/>
    <property type="match status" value="1"/>
</dbReference>
<dbReference type="InterPro" id="IPR001412">
    <property type="entry name" value="aa-tRNA-synth_I_CS"/>
</dbReference>
<dbReference type="InterPro" id="IPR002305">
    <property type="entry name" value="aa-tRNA-synth_Ic"/>
</dbReference>
<dbReference type="InterPro" id="IPR014729">
    <property type="entry name" value="Rossmann-like_a/b/a_fold"/>
</dbReference>
<dbReference type="InterPro" id="IPR002942">
    <property type="entry name" value="S4_RNA-bd"/>
</dbReference>
<dbReference type="InterPro" id="IPR036986">
    <property type="entry name" value="S4_RNA-bd_sf"/>
</dbReference>
<dbReference type="InterPro" id="IPR054608">
    <property type="entry name" value="SYY-like_C"/>
</dbReference>
<dbReference type="InterPro" id="IPR002307">
    <property type="entry name" value="Tyr-tRNA-ligase"/>
</dbReference>
<dbReference type="InterPro" id="IPR024088">
    <property type="entry name" value="Tyr-tRNA-ligase_bac-type"/>
</dbReference>
<dbReference type="InterPro" id="IPR024108">
    <property type="entry name" value="Tyr-tRNA-ligase_bac_2"/>
</dbReference>
<dbReference type="NCBIfam" id="TIGR00234">
    <property type="entry name" value="tyrS"/>
    <property type="match status" value="1"/>
</dbReference>
<dbReference type="PANTHER" id="PTHR11766:SF1">
    <property type="entry name" value="TYROSINE--TRNA LIGASE"/>
    <property type="match status" value="1"/>
</dbReference>
<dbReference type="PANTHER" id="PTHR11766">
    <property type="entry name" value="TYROSYL-TRNA SYNTHETASE"/>
    <property type="match status" value="1"/>
</dbReference>
<dbReference type="Pfam" id="PF22421">
    <property type="entry name" value="SYY_C-terminal"/>
    <property type="match status" value="1"/>
</dbReference>
<dbReference type="Pfam" id="PF00579">
    <property type="entry name" value="tRNA-synt_1b"/>
    <property type="match status" value="1"/>
</dbReference>
<dbReference type="PRINTS" id="PR01040">
    <property type="entry name" value="TRNASYNTHTYR"/>
</dbReference>
<dbReference type="SMART" id="SM00363">
    <property type="entry name" value="S4"/>
    <property type="match status" value="1"/>
</dbReference>
<dbReference type="SUPFAM" id="SSF55174">
    <property type="entry name" value="Alpha-L RNA-binding motif"/>
    <property type="match status" value="1"/>
</dbReference>
<dbReference type="SUPFAM" id="SSF52374">
    <property type="entry name" value="Nucleotidylyl transferase"/>
    <property type="match status" value="1"/>
</dbReference>
<dbReference type="PROSITE" id="PS00178">
    <property type="entry name" value="AA_TRNA_LIGASE_I"/>
    <property type="match status" value="1"/>
</dbReference>
<dbReference type="PROSITE" id="PS50889">
    <property type="entry name" value="S4"/>
    <property type="match status" value="1"/>
</dbReference>
<name>SYY_DEHM1</name>
<reference key="1">
    <citation type="journal article" date="2005" name="Science">
        <title>Genome sequence of the PCE-dechlorinating bacterium Dehalococcoides ethenogenes.</title>
        <authorList>
            <person name="Seshadri R."/>
            <person name="Adrian L."/>
            <person name="Fouts D.E."/>
            <person name="Eisen J.A."/>
            <person name="Phillippy A.M."/>
            <person name="Methe B.A."/>
            <person name="Ward N.L."/>
            <person name="Nelson W.C."/>
            <person name="DeBoy R.T."/>
            <person name="Khouri H.M."/>
            <person name="Kolonay J.F."/>
            <person name="Dodson R.J."/>
            <person name="Daugherty S.C."/>
            <person name="Brinkac L.M."/>
            <person name="Sullivan S.A."/>
            <person name="Madupu R."/>
            <person name="Nelson K.E."/>
            <person name="Kang K.H."/>
            <person name="Impraim M."/>
            <person name="Tran K."/>
            <person name="Robinson J.M."/>
            <person name="Forberger H.A."/>
            <person name="Fraser C.M."/>
            <person name="Zinder S.H."/>
            <person name="Heidelberg J.F."/>
        </authorList>
    </citation>
    <scope>NUCLEOTIDE SEQUENCE [LARGE SCALE GENOMIC DNA]</scope>
    <source>
        <strain>ATCC BAA-2266 / KCTC 15142 / 195</strain>
    </source>
</reference>
<proteinExistence type="inferred from homology"/>
<gene>
    <name evidence="1" type="primary">tyrS</name>
    <name type="ordered locus">DET0601</name>
</gene>
<protein>
    <recommendedName>
        <fullName evidence="1">Tyrosine--tRNA ligase</fullName>
        <ecNumber evidence="1">6.1.1.1</ecNumber>
    </recommendedName>
    <alternativeName>
        <fullName evidence="1">Tyrosyl-tRNA synthetase</fullName>
        <shortName evidence="1">TyrRS</shortName>
    </alternativeName>
</protein>
<accession>Q3Z8V6</accession>
<organism>
    <name type="scientific">Dehalococcoides mccartyi (strain ATCC BAA-2266 / KCTC 15142 / 195)</name>
    <name type="common">Dehalococcoides ethenogenes (strain 195)</name>
    <dbReference type="NCBI Taxonomy" id="243164"/>
    <lineage>
        <taxon>Bacteria</taxon>
        <taxon>Bacillati</taxon>
        <taxon>Chloroflexota</taxon>
        <taxon>Dehalococcoidia</taxon>
        <taxon>Dehalococcoidales</taxon>
        <taxon>Dehalococcoidaceae</taxon>
        <taxon>Dehalococcoides</taxon>
    </lineage>
</organism>